<feature type="chain" id="PRO_0000233609" description="Small ribosomal subunit protein uS17">
    <location>
        <begin position="1"/>
        <end position="78"/>
    </location>
</feature>
<gene>
    <name evidence="1" type="primary">rpsQ</name>
    <name type="ordered locus">WD_0672</name>
</gene>
<keyword id="KW-0687">Ribonucleoprotein</keyword>
<keyword id="KW-0689">Ribosomal protein</keyword>
<keyword id="KW-0694">RNA-binding</keyword>
<keyword id="KW-0699">rRNA-binding</keyword>
<reference key="1">
    <citation type="journal article" date="2004" name="PLoS Biol.">
        <title>Phylogenomics of the reproductive parasite Wolbachia pipientis wMel: a streamlined genome overrun by mobile genetic elements.</title>
        <authorList>
            <person name="Wu M."/>
            <person name="Sun L.V."/>
            <person name="Vamathevan J.J."/>
            <person name="Riegler M."/>
            <person name="DeBoy R.T."/>
            <person name="Brownlie J.C."/>
            <person name="McGraw E.A."/>
            <person name="Martin W."/>
            <person name="Esser C."/>
            <person name="Ahmadinejad N."/>
            <person name="Wiegand C."/>
            <person name="Madupu R."/>
            <person name="Beanan M.J."/>
            <person name="Brinkac L.M."/>
            <person name="Daugherty S.C."/>
            <person name="Durkin A.S."/>
            <person name="Kolonay J.F."/>
            <person name="Nelson W.C."/>
            <person name="Mohamoud Y."/>
            <person name="Lee P."/>
            <person name="Berry K.J."/>
            <person name="Young M.B."/>
            <person name="Utterback T.R."/>
            <person name="Weidman J.F."/>
            <person name="Nierman W.C."/>
            <person name="Paulsen I.T."/>
            <person name="Nelson K.E."/>
            <person name="Tettelin H."/>
            <person name="O'Neill S.L."/>
            <person name="Eisen J.A."/>
        </authorList>
    </citation>
    <scope>NUCLEOTIDE SEQUENCE [LARGE SCALE GENOMIC DNA]</scope>
</reference>
<accession>Q73H95</accession>
<organism>
    <name type="scientific">Wolbachia pipientis wMel</name>
    <dbReference type="NCBI Taxonomy" id="163164"/>
    <lineage>
        <taxon>Bacteria</taxon>
        <taxon>Pseudomonadati</taxon>
        <taxon>Pseudomonadota</taxon>
        <taxon>Alphaproteobacteria</taxon>
        <taxon>Rickettsiales</taxon>
        <taxon>Anaplasmataceae</taxon>
        <taxon>Wolbachieae</taxon>
        <taxon>Wolbachia</taxon>
    </lineage>
</organism>
<dbReference type="EMBL" id="AE017196">
    <property type="protein sequence ID" value="AAS14370.1"/>
    <property type="molecule type" value="Genomic_DNA"/>
</dbReference>
<dbReference type="RefSeq" id="WP_007549925.1">
    <property type="nucleotide sequence ID" value="NZ_OX384529.1"/>
</dbReference>
<dbReference type="SMR" id="Q73H95"/>
<dbReference type="EnsemblBacteria" id="AAS14370">
    <property type="protein sequence ID" value="AAS14370"/>
    <property type="gene ID" value="WD_0672"/>
</dbReference>
<dbReference type="GeneID" id="70036155"/>
<dbReference type="KEGG" id="wol:WD_0672"/>
<dbReference type="eggNOG" id="COG0186">
    <property type="taxonomic scope" value="Bacteria"/>
</dbReference>
<dbReference type="Proteomes" id="UP000008215">
    <property type="component" value="Chromosome"/>
</dbReference>
<dbReference type="GO" id="GO:0022627">
    <property type="term" value="C:cytosolic small ribosomal subunit"/>
    <property type="evidence" value="ECO:0007669"/>
    <property type="project" value="TreeGrafter"/>
</dbReference>
<dbReference type="GO" id="GO:0019843">
    <property type="term" value="F:rRNA binding"/>
    <property type="evidence" value="ECO:0007669"/>
    <property type="project" value="UniProtKB-UniRule"/>
</dbReference>
<dbReference type="GO" id="GO:0003735">
    <property type="term" value="F:structural constituent of ribosome"/>
    <property type="evidence" value="ECO:0007669"/>
    <property type="project" value="InterPro"/>
</dbReference>
<dbReference type="GO" id="GO:0006412">
    <property type="term" value="P:translation"/>
    <property type="evidence" value="ECO:0007669"/>
    <property type="project" value="UniProtKB-UniRule"/>
</dbReference>
<dbReference type="CDD" id="cd00364">
    <property type="entry name" value="Ribosomal_uS17"/>
    <property type="match status" value="1"/>
</dbReference>
<dbReference type="Gene3D" id="2.40.50.140">
    <property type="entry name" value="Nucleic acid-binding proteins"/>
    <property type="match status" value="1"/>
</dbReference>
<dbReference type="HAMAP" id="MF_01345_B">
    <property type="entry name" value="Ribosomal_uS17_B"/>
    <property type="match status" value="1"/>
</dbReference>
<dbReference type="InterPro" id="IPR012340">
    <property type="entry name" value="NA-bd_OB-fold"/>
</dbReference>
<dbReference type="InterPro" id="IPR000266">
    <property type="entry name" value="Ribosomal_uS17"/>
</dbReference>
<dbReference type="InterPro" id="IPR019984">
    <property type="entry name" value="Ribosomal_uS17_bact/chlr"/>
</dbReference>
<dbReference type="InterPro" id="IPR019979">
    <property type="entry name" value="Ribosomal_uS17_CS"/>
</dbReference>
<dbReference type="NCBIfam" id="NF004123">
    <property type="entry name" value="PRK05610.1"/>
    <property type="match status" value="1"/>
</dbReference>
<dbReference type="NCBIfam" id="TIGR03635">
    <property type="entry name" value="uS17_bact"/>
    <property type="match status" value="1"/>
</dbReference>
<dbReference type="PANTHER" id="PTHR10744">
    <property type="entry name" value="40S RIBOSOMAL PROTEIN S11 FAMILY MEMBER"/>
    <property type="match status" value="1"/>
</dbReference>
<dbReference type="PANTHER" id="PTHR10744:SF1">
    <property type="entry name" value="SMALL RIBOSOMAL SUBUNIT PROTEIN US17M"/>
    <property type="match status" value="1"/>
</dbReference>
<dbReference type="Pfam" id="PF00366">
    <property type="entry name" value="Ribosomal_S17"/>
    <property type="match status" value="1"/>
</dbReference>
<dbReference type="PRINTS" id="PR00973">
    <property type="entry name" value="RIBOSOMALS17"/>
</dbReference>
<dbReference type="SUPFAM" id="SSF50249">
    <property type="entry name" value="Nucleic acid-binding proteins"/>
    <property type="match status" value="1"/>
</dbReference>
<dbReference type="PROSITE" id="PS00056">
    <property type="entry name" value="RIBOSOMAL_S17"/>
    <property type="match status" value="1"/>
</dbReference>
<evidence type="ECO:0000255" key="1">
    <source>
        <dbReference type="HAMAP-Rule" id="MF_01345"/>
    </source>
</evidence>
<evidence type="ECO:0000305" key="2"/>
<sequence>MPKKVFCGTVTKAKCDKTVKVSVLQVYKDELYKKVIKKYKKYTAHDENNSCKEGDKVLIQEHKPISTTKKWVIVNSSH</sequence>
<comment type="function">
    <text evidence="1">One of the primary rRNA binding proteins, it binds specifically to the 5'-end of 16S ribosomal RNA.</text>
</comment>
<comment type="subunit">
    <text evidence="1">Part of the 30S ribosomal subunit.</text>
</comment>
<comment type="similarity">
    <text evidence="1">Belongs to the universal ribosomal protein uS17 family.</text>
</comment>
<name>RS17_WOLPM</name>
<proteinExistence type="inferred from homology"/>
<protein>
    <recommendedName>
        <fullName evidence="1">Small ribosomal subunit protein uS17</fullName>
    </recommendedName>
    <alternativeName>
        <fullName evidence="2">30S ribosomal protein S17</fullName>
    </alternativeName>
</protein>